<evidence type="ECO:0000255" key="1">
    <source>
        <dbReference type="HAMAP-Rule" id="MF_00265"/>
    </source>
</evidence>
<evidence type="ECO:0000269" key="2">
    <source>
    </source>
</evidence>
<evidence type="ECO:0007829" key="3">
    <source>
        <dbReference type="PDB" id="5X3T"/>
    </source>
</evidence>
<keyword id="KW-0002">3D-structure</keyword>
<keyword id="KW-0378">Hydrolase</keyword>
<keyword id="KW-0460">Magnesium</keyword>
<keyword id="KW-0479">Metal-binding</keyword>
<keyword id="KW-0540">Nuclease</keyword>
<keyword id="KW-1185">Reference proteome</keyword>
<keyword id="KW-1277">Toxin-antitoxin system</keyword>
<accession>O53779</accession>
<accession>L0T439</accession>
<comment type="function">
    <text evidence="1 2">Toxic component of a type II toxin-antitoxin (TA) system. An RNase (By similarity). Upon expression in M.smegmatis inhibits colony formation. Its toxic effect is neutralized by coexpression with cognate antitoxin VapB26.</text>
</comment>
<comment type="cofactor">
    <cofactor evidence="1">
        <name>Mg(2+)</name>
        <dbReference type="ChEBI" id="CHEBI:18420"/>
    </cofactor>
</comment>
<comment type="similarity">
    <text evidence="1">Belongs to the PINc/VapC protein family.</text>
</comment>
<name>VPC26_MYCTU</name>
<reference key="1">
    <citation type="journal article" date="1998" name="Nature">
        <title>Deciphering the biology of Mycobacterium tuberculosis from the complete genome sequence.</title>
        <authorList>
            <person name="Cole S.T."/>
            <person name="Brosch R."/>
            <person name="Parkhill J."/>
            <person name="Garnier T."/>
            <person name="Churcher C.M."/>
            <person name="Harris D.E."/>
            <person name="Gordon S.V."/>
            <person name="Eiglmeier K."/>
            <person name="Gas S."/>
            <person name="Barry C.E. III"/>
            <person name="Tekaia F."/>
            <person name="Badcock K."/>
            <person name="Basham D."/>
            <person name="Brown D."/>
            <person name="Chillingworth T."/>
            <person name="Connor R."/>
            <person name="Davies R.M."/>
            <person name="Devlin K."/>
            <person name="Feltwell T."/>
            <person name="Gentles S."/>
            <person name="Hamlin N."/>
            <person name="Holroyd S."/>
            <person name="Hornsby T."/>
            <person name="Jagels K."/>
            <person name="Krogh A."/>
            <person name="McLean J."/>
            <person name="Moule S."/>
            <person name="Murphy L.D."/>
            <person name="Oliver S."/>
            <person name="Osborne J."/>
            <person name="Quail M.A."/>
            <person name="Rajandream M.A."/>
            <person name="Rogers J."/>
            <person name="Rutter S."/>
            <person name="Seeger K."/>
            <person name="Skelton S."/>
            <person name="Squares S."/>
            <person name="Squares R."/>
            <person name="Sulston J.E."/>
            <person name="Taylor K."/>
            <person name="Whitehead S."/>
            <person name="Barrell B.G."/>
        </authorList>
    </citation>
    <scope>NUCLEOTIDE SEQUENCE [LARGE SCALE GENOMIC DNA]</scope>
    <source>
        <strain>ATCC 25618 / H37Rv</strain>
    </source>
</reference>
<reference key="2">
    <citation type="journal article" date="2009" name="PLoS Genet.">
        <title>Comprehensive functional analysis of Mycobacterium tuberculosis toxin-antitoxin systems: implications for pathogenesis, stress responses, and evolution.</title>
        <authorList>
            <person name="Ramage H.R."/>
            <person name="Connolly L.E."/>
            <person name="Cox J.S."/>
        </authorList>
    </citation>
    <scope>EXPRESSION IN M.SMEGMATIS</scope>
    <scope>FUNCTION AS A TOXIN</scope>
    <source>
        <strain>ATCC 35801 / TMC 107 / Erdman</strain>
    </source>
</reference>
<reference key="3">
    <citation type="journal article" date="2011" name="Mol. Cell. Proteomics">
        <title>Proteogenomic analysis of Mycobacterium tuberculosis by high resolution mass spectrometry.</title>
        <authorList>
            <person name="Kelkar D.S."/>
            <person name="Kumar D."/>
            <person name="Kumar P."/>
            <person name="Balakrishnan L."/>
            <person name="Muthusamy B."/>
            <person name="Yadav A.K."/>
            <person name="Shrivastava P."/>
            <person name="Marimuthu A."/>
            <person name="Anand S."/>
            <person name="Sundaram H."/>
            <person name="Kingsbury R."/>
            <person name="Harsha H.C."/>
            <person name="Nair B."/>
            <person name="Prasad T.S."/>
            <person name="Chauhan D.S."/>
            <person name="Katoch K."/>
            <person name="Katoch V.M."/>
            <person name="Kumar P."/>
            <person name="Chaerkady R."/>
            <person name="Ramachandran S."/>
            <person name="Dash D."/>
            <person name="Pandey A."/>
        </authorList>
    </citation>
    <scope>IDENTIFICATION BY MASS SPECTROMETRY [LARGE SCALE ANALYSIS]</scope>
    <source>
        <strain>ATCC 25618 / H37Rv</strain>
    </source>
</reference>
<dbReference type="EC" id="3.1.-.-" evidence="1"/>
<dbReference type="EMBL" id="AL123456">
    <property type="protein sequence ID" value="CCP43320.1"/>
    <property type="molecule type" value="Genomic_DNA"/>
</dbReference>
<dbReference type="PIR" id="E70934">
    <property type="entry name" value="E70934"/>
</dbReference>
<dbReference type="RefSeq" id="NP_215096.1">
    <property type="nucleotide sequence ID" value="NC_000962.3"/>
</dbReference>
<dbReference type="RefSeq" id="WP_003403047.1">
    <property type="nucleotide sequence ID" value="NZ_NVQJ01000033.1"/>
</dbReference>
<dbReference type="PDB" id="5X3T">
    <property type="method" value="X-ray"/>
    <property type="resolution" value="2.65 A"/>
    <property type="chains" value="B/D/F/H=1-135"/>
</dbReference>
<dbReference type="PDBsum" id="5X3T"/>
<dbReference type="SMR" id="O53779"/>
<dbReference type="STRING" id="83332.Rv0582"/>
<dbReference type="PaxDb" id="83332-Rv0582"/>
<dbReference type="DNASU" id="887747"/>
<dbReference type="GeneID" id="887747"/>
<dbReference type="KEGG" id="mtu:Rv0582"/>
<dbReference type="KEGG" id="mtv:RVBD_0582"/>
<dbReference type="TubercuList" id="Rv0582"/>
<dbReference type="eggNOG" id="COG2402">
    <property type="taxonomic scope" value="Bacteria"/>
</dbReference>
<dbReference type="InParanoid" id="O53779"/>
<dbReference type="OrthoDB" id="32665at2"/>
<dbReference type="Proteomes" id="UP000001584">
    <property type="component" value="Chromosome"/>
</dbReference>
<dbReference type="GO" id="GO:0000287">
    <property type="term" value="F:magnesium ion binding"/>
    <property type="evidence" value="ECO:0007669"/>
    <property type="project" value="UniProtKB-UniRule"/>
</dbReference>
<dbReference type="GO" id="GO:0004540">
    <property type="term" value="F:RNA nuclease activity"/>
    <property type="evidence" value="ECO:0007669"/>
    <property type="project" value="InterPro"/>
</dbReference>
<dbReference type="GO" id="GO:0045926">
    <property type="term" value="P:negative regulation of growth"/>
    <property type="evidence" value="ECO:0000315"/>
    <property type="project" value="MTBBASE"/>
</dbReference>
<dbReference type="CDD" id="cd18696">
    <property type="entry name" value="PIN_MtVapC26-like"/>
    <property type="match status" value="1"/>
</dbReference>
<dbReference type="Gene3D" id="3.40.50.1010">
    <property type="entry name" value="5'-nuclease"/>
    <property type="match status" value="1"/>
</dbReference>
<dbReference type="HAMAP" id="MF_00265">
    <property type="entry name" value="VapC_Nob1"/>
    <property type="match status" value="1"/>
</dbReference>
<dbReference type="InterPro" id="IPR029060">
    <property type="entry name" value="PIN-like_dom_sf"/>
</dbReference>
<dbReference type="InterPro" id="IPR002716">
    <property type="entry name" value="PIN_dom"/>
</dbReference>
<dbReference type="InterPro" id="IPR022907">
    <property type="entry name" value="VapC_family"/>
</dbReference>
<dbReference type="Pfam" id="PF01850">
    <property type="entry name" value="PIN"/>
    <property type="match status" value="1"/>
</dbReference>
<dbReference type="SUPFAM" id="SSF88723">
    <property type="entry name" value="PIN domain-like"/>
    <property type="match status" value="1"/>
</dbReference>
<protein>
    <recommendedName>
        <fullName evidence="1">Ribonuclease VapC26</fullName>
        <shortName evidence="1">RNase VapC26</shortName>
        <ecNumber evidence="1">3.1.-.-</ecNumber>
    </recommendedName>
    <alternativeName>
        <fullName evidence="1">Toxin VapC26</fullName>
    </alternativeName>
</protein>
<feature type="chain" id="PRO_0000407885" description="Ribonuclease VapC26">
    <location>
        <begin position="1"/>
        <end position="135"/>
    </location>
</feature>
<feature type="domain" description="PINc" evidence="1">
    <location>
        <begin position="1"/>
        <end position="118"/>
    </location>
</feature>
<feature type="binding site" evidence="1">
    <location>
        <position position="4"/>
    </location>
    <ligand>
        <name>Mg(2+)</name>
        <dbReference type="ChEBI" id="CHEBI:18420"/>
    </ligand>
</feature>
<feature type="binding site" evidence="1">
    <location>
        <position position="97"/>
    </location>
    <ligand>
        <name>Mg(2+)</name>
        <dbReference type="ChEBI" id="CHEBI:18420"/>
    </ligand>
</feature>
<feature type="strand" evidence="3">
    <location>
        <begin position="1"/>
        <end position="3"/>
    </location>
</feature>
<feature type="helix" evidence="3">
    <location>
        <begin position="5"/>
        <end position="12"/>
    </location>
</feature>
<feature type="helix" evidence="3">
    <location>
        <begin position="19"/>
        <end position="26"/>
    </location>
</feature>
<feature type="strand" evidence="3">
    <location>
        <begin position="33"/>
        <end position="35"/>
    </location>
</feature>
<feature type="helix" evidence="3">
    <location>
        <begin position="37"/>
        <end position="50"/>
    </location>
</feature>
<feature type="helix" evidence="3">
    <location>
        <begin position="53"/>
        <end position="64"/>
    </location>
</feature>
<feature type="strand" evidence="3">
    <location>
        <begin position="65"/>
        <end position="70"/>
    </location>
</feature>
<feature type="helix" evidence="3">
    <location>
        <begin position="75"/>
        <end position="87"/>
    </location>
</feature>
<feature type="helix" evidence="3">
    <location>
        <begin position="89"/>
        <end position="91"/>
    </location>
</feature>
<feature type="helix" evidence="3">
    <location>
        <begin position="94"/>
        <end position="106"/>
    </location>
</feature>
<feature type="strand" evidence="3">
    <location>
        <begin position="111"/>
        <end position="113"/>
    </location>
</feature>
<feature type="helix" evidence="3">
    <location>
        <begin position="117"/>
        <end position="121"/>
    </location>
</feature>
<feature type="strand" evidence="3">
    <location>
        <begin position="132"/>
        <end position="134"/>
    </location>
</feature>
<gene>
    <name evidence="1" type="primary">vapC26</name>
    <name type="ordered locus">Rv0582</name>
</gene>
<sequence length="135" mass="14503">MIIDTSALLAYFDAAEPDHAAVSECIDSSADALVVSPYVVAELDYLVATRVGVDAELAVLRELAGGAWELANCGAAEIEQAARIVTKYQDQRIGIADAANVVLADRYRTRTILTLDRRHFSALRPIGGGRFTVIP</sequence>
<proteinExistence type="evidence at protein level"/>
<organism>
    <name type="scientific">Mycobacterium tuberculosis (strain ATCC 25618 / H37Rv)</name>
    <dbReference type="NCBI Taxonomy" id="83332"/>
    <lineage>
        <taxon>Bacteria</taxon>
        <taxon>Bacillati</taxon>
        <taxon>Actinomycetota</taxon>
        <taxon>Actinomycetes</taxon>
        <taxon>Mycobacteriales</taxon>
        <taxon>Mycobacteriaceae</taxon>
        <taxon>Mycobacterium</taxon>
        <taxon>Mycobacterium tuberculosis complex</taxon>
    </lineage>
</organism>